<reference evidence="5" key="1">
    <citation type="journal article" date="2007" name="J. Sci. Food Agric.">
        <title>Purification and characterization of a cationic peroxidase from artichoke leaves.</title>
        <authorList>
            <person name="Cardinali A."/>
            <person name="Sergio L."/>
            <person name="Di Venere D."/>
            <person name="Linsalata V."/>
            <person name="Fortunato D."/>
            <person name="Conti A."/>
            <person name="Lattanzio V."/>
        </authorList>
        <dbReference type="AGRICOLA" id="IND44019705"/>
    </citation>
    <scope>PROTEIN SEQUENCE</scope>
    <source>
        <strain evidence="3">cv. Violetto di Provenza</strain>
        <tissue evidence="3">Leaf</tissue>
    </source>
</reference>
<protein>
    <recommendedName>
        <fullName>Peroxidase</fullName>
        <ecNumber>1.11.1.7</ecNumber>
    </recommendedName>
</protein>
<proteinExistence type="evidence at protein level"/>
<feature type="chain" id="PRO_0000055606" description="Peroxidase">
    <location>
        <begin position="1" status="less than"/>
        <end position="43" status="greater than"/>
    </location>
</feature>
<feature type="non-consecutive residues" evidence="4">
    <location>
        <begin position="13"/>
        <end position="14"/>
    </location>
</feature>
<feature type="non-consecutive residues" evidence="4">
    <location>
        <begin position="28"/>
        <end position="29"/>
    </location>
</feature>
<feature type="non-terminal residue" evidence="4">
    <location>
        <position position="1"/>
    </location>
</feature>
<feature type="non-terminal residue" evidence="4">
    <location>
        <position position="43"/>
    </location>
</feature>
<dbReference type="EC" id="1.11.1.7"/>
<dbReference type="SMR" id="P84714"/>
<dbReference type="BRENDA" id="1.11.1.7">
    <property type="organism ID" value="1789"/>
</dbReference>
<dbReference type="GO" id="GO:0140825">
    <property type="term" value="F:lactoperoxidase activity"/>
    <property type="evidence" value="ECO:0007669"/>
    <property type="project" value="UniProtKB-EC"/>
</dbReference>
<dbReference type="GO" id="GO:0046872">
    <property type="term" value="F:metal ion binding"/>
    <property type="evidence" value="ECO:0007669"/>
    <property type="project" value="UniProtKB-KW"/>
</dbReference>
<dbReference type="GO" id="GO:0042744">
    <property type="term" value="P:hydrogen peroxide catabolic process"/>
    <property type="evidence" value="ECO:0007669"/>
    <property type="project" value="UniProtKB-KW"/>
</dbReference>
<name>PER_CYNCS</name>
<evidence type="ECO:0000250" key="1">
    <source>
        <dbReference type="UniProtKB" id="P00433"/>
    </source>
</evidence>
<evidence type="ECO:0000255" key="2">
    <source>
        <dbReference type="PROSITE-ProRule" id="PRU00297"/>
    </source>
</evidence>
<evidence type="ECO:0000269" key="3">
    <source ref="1"/>
</evidence>
<evidence type="ECO:0000303" key="4">
    <source ref="1"/>
</evidence>
<evidence type="ECO:0000305" key="5"/>
<keyword id="KW-0106">Calcium</keyword>
<keyword id="KW-0903">Direct protein sequencing</keyword>
<keyword id="KW-0349">Heme</keyword>
<keyword id="KW-0376">Hydrogen peroxide</keyword>
<keyword id="KW-0408">Iron</keyword>
<keyword id="KW-0479">Metal-binding</keyword>
<keyword id="KW-0560">Oxidoreductase</keyword>
<keyword id="KW-0575">Peroxidase</keyword>
<comment type="function">
    <text evidence="5">Removal of H(2)O(2), oxidation of toxic reductants, biosynthesis and degradation of lignin, suberization, auxin catabolism, response to environmental stresses such as wounding, pathogen attack and oxidative stress. These functions might be dependent on each isozyme/isoform in each plant tissue.</text>
</comment>
<comment type="catalytic activity">
    <reaction>
        <text>2 a phenolic donor + H2O2 = 2 a phenolic radical donor + 2 H2O</text>
        <dbReference type="Rhea" id="RHEA:56136"/>
        <dbReference type="ChEBI" id="CHEBI:15377"/>
        <dbReference type="ChEBI" id="CHEBI:16240"/>
        <dbReference type="ChEBI" id="CHEBI:139520"/>
        <dbReference type="ChEBI" id="CHEBI:139521"/>
        <dbReference type="EC" id="1.11.1.7"/>
    </reaction>
</comment>
<comment type="cofactor">
    <cofactor evidence="1 2">
        <name>Ca(2+)</name>
        <dbReference type="ChEBI" id="CHEBI:29108"/>
    </cofactor>
    <text evidence="1 2">Binds 2 calcium ions per subunit.</text>
</comment>
<comment type="cofactor">
    <cofactor evidence="1 2">
        <name>heme b</name>
        <dbReference type="ChEBI" id="CHEBI:60344"/>
    </cofactor>
    <text evidence="1 2">Binds 1 heme b (iron(II)-protoporphyrin IX) group per subunit.</text>
</comment>
<comment type="miscellaneous">
    <text evidence="3">On the 2D-gel the determined pI of this protein is: 9.3, its MW is: 38249 kDa.</text>
</comment>
<comment type="similarity">
    <text evidence="2">Belongs to the peroxidase family. Classical plant (class III) peroxidase subfamily.</text>
</comment>
<sequence>VVSCADITALAARQGLFTSDQDLYTDSRMGQLNVLTGTQGEIR</sequence>
<accession>P84714</accession>
<organism>
    <name type="scientific">Cynara cardunculus var. scolymus</name>
    <name type="common">Globe artichoke</name>
    <name type="synonym">Cynara scolymus</name>
    <dbReference type="NCBI Taxonomy" id="59895"/>
    <lineage>
        <taxon>Eukaryota</taxon>
        <taxon>Viridiplantae</taxon>
        <taxon>Streptophyta</taxon>
        <taxon>Embryophyta</taxon>
        <taxon>Tracheophyta</taxon>
        <taxon>Spermatophyta</taxon>
        <taxon>Magnoliopsida</taxon>
        <taxon>eudicotyledons</taxon>
        <taxon>Gunneridae</taxon>
        <taxon>Pentapetalae</taxon>
        <taxon>asterids</taxon>
        <taxon>campanulids</taxon>
        <taxon>Asterales</taxon>
        <taxon>Asteraceae</taxon>
        <taxon>Carduoideae</taxon>
        <taxon>Cardueae</taxon>
        <taxon>Carduinae</taxon>
        <taxon>Cynara</taxon>
    </lineage>
</organism>